<accession>B2I9W6</accession>
<name>PHS_XYLF2</name>
<protein>
    <recommendedName>
        <fullName evidence="1">Putative pterin-4-alpha-carbinolamine dehydratase</fullName>
        <shortName evidence="1">PHS</shortName>
        <ecNumber evidence="1">4.2.1.96</ecNumber>
    </recommendedName>
    <alternativeName>
        <fullName evidence="1">4-alpha-hydroxy-tetrahydropterin dehydratase</fullName>
    </alternativeName>
    <alternativeName>
        <fullName evidence="1">Pterin carbinolamine dehydratase</fullName>
        <shortName evidence="1">PCD</shortName>
    </alternativeName>
</protein>
<keyword id="KW-0456">Lyase</keyword>
<evidence type="ECO:0000255" key="1">
    <source>
        <dbReference type="HAMAP-Rule" id="MF_00434"/>
    </source>
</evidence>
<sequence>MNDRITLAQAHCQPREKKEHKLGQARLAELLTQVPGWELSNNGHALTRTFQFDNYYRTLAFVNALAFIAHCEDHHPDMNVHYGRAVVCFSTHKIGGISEIDFICAAKTSALYEQGI</sequence>
<comment type="catalytic activity">
    <reaction evidence="1">
        <text>(4aS,6R)-4a-hydroxy-L-erythro-5,6,7,8-tetrahydrobiopterin = (6R)-L-erythro-6,7-dihydrobiopterin + H2O</text>
        <dbReference type="Rhea" id="RHEA:11920"/>
        <dbReference type="ChEBI" id="CHEBI:15377"/>
        <dbReference type="ChEBI" id="CHEBI:15642"/>
        <dbReference type="ChEBI" id="CHEBI:43120"/>
        <dbReference type="EC" id="4.2.1.96"/>
    </reaction>
</comment>
<comment type="similarity">
    <text evidence="1">Belongs to the pterin-4-alpha-carbinolamine dehydratase family.</text>
</comment>
<feature type="chain" id="PRO_1000192946" description="Putative pterin-4-alpha-carbinolamine dehydratase">
    <location>
        <begin position="1"/>
        <end position="116"/>
    </location>
</feature>
<gene>
    <name type="ordered locus">XfasM23_2085</name>
</gene>
<dbReference type="EC" id="4.2.1.96" evidence="1"/>
<dbReference type="EMBL" id="CP001011">
    <property type="protein sequence ID" value="ACB93483.1"/>
    <property type="molecule type" value="Genomic_DNA"/>
</dbReference>
<dbReference type="RefSeq" id="WP_004087537.1">
    <property type="nucleotide sequence ID" value="NC_010577.1"/>
</dbReference>
<dbReference type="SMR" id="B2I9W6"/>
<dbReference type="KEGG" id="xfn:XfasM23_2085"/>
<dbReference type="HOGENOM" id="CLU_081974_2_1_6"/>
<dbReference type="Proteomes" id="UP000001698">
    <property type="component" value="Chromosome"/>
</dbReference>
<dbReference type="GO" id="GO:0008124">
    <property type="term" value="F:4-alpha-hydroxytetrahydrobiopterin dehydratase activity"/>
    <property type="evidence" value="ECO:0007669"/>
    <property type="project" value="UniProtKB-UniRule"/>
</dbReference>
<dbReference type="GO" id="GO:0006729">
    <property type="term" value="P:tetrahydrobiopterin biosynthetic process"/>
    <property type="evidence" value="ECO:0007669"/>
    <property type="project" value="InterPro"/>
</dbReference>
<dbReference type="CDD" id="cd00913">
    <property type="entry name" value="PCD_DCoH_subfamily_a"/>
    <property type="match status" value="1"/>
</dbReference>
<dbReference type="Gene3D" id="3.30.1360.20">
    <property type="entry name" value="Transcriptional coactivator/pterin dehydratase"/>
    <property type="match status" value="1"/>
</dbReference>
<dbReference type="HAMAP" id="MF_00434">
    <property type="entry name" value="Pterin_4_alpha"/>
    <property type="match status" value="1"/>
</dbReference>
<dbReference type="InterPro" id="IPR036428">
    <property type="entry name" value="PCD_sf"/>
</dbReference>
<dbReference type="InterPro" id="IPR001533">
    <property type="entry name" value="Pterin_deHydtase"/>
</dbReference>
<dbReference type="NCBIfam" id="NF002019">
    <property type="entry name" value="PRK00823.1-4"/>
    <property type="match status" value="1"/>
</dbReference>
<dbReference type="PANTHER" id="PTHR12599">
    <property type="entry name" value="PTERIN-4-ALPHA-CARBINOLAMINE DEHYDRATASE"/>
    <property type="match status" value="1"/>
</dbReference>
<dbReference type="PANTHER" id="PTHR12599:SF0">
    <property type="entry name" value="PTERIN-4-ALPHA-CARBINOLAMINE DEHYDRATASE"/>
    <property type="match status" value="1"/>
</dbReference>
<dbReference type="Pfam" id="PF01329">
    <property type="entry name" value="Pterin_4a"/>
    <property type="match status" value="1"/>
</dbReference>
<dbReference type="SUPFAM" id="SSF55248">
    <property type="entry name" value="PCD-like"/>
    <property type="match status" value="1"/>
</dbReference>
<reference key="1">
    <citation type="journal article" date="2010" name="J. Bacteriol.">
        <title>Whole genome sequences of two Xylella fastidiosa strains (M12 and M23) causing almond leaf scorch disease in California.</title>
        <authorList>
            <person name="Chen J."/>
            <person name="Xie G."/>
            <person name="Han S."/>
            <person name="Chertkov O."/>
            <person name="Sims D."/>
            <person name="Civerolo E.L."/>
        </authorList>
    </citation>
    <scope>NUCLEOTIDE SEQUENCE [LARGE SCALE GENOMIC DNA]</scope>
    <source>
        <strain>M23</strain>
    </source>
</reference>
<proteinExistence type="inferred from homology"/>
<organism>
    <name type="scientific">Xylella fastidiosa (strain M23)</name>
    <dbReference type="NCBI Taxonomy" id="405441"/>
    <lineage>
        <taxon>Bacteria</taxon>
        <taxon>Pseudomonadati</taxon>
        <taxon>Pseudomonadota</taxon>
        <taxon>Gammaproteobacteria</taxon>
        <taxon>Lysobacterales</taxon>
        <taxon>Lysobacteraceae</taxon>
        <taxon>Xylella</taxon>
    </lineage>
</organism>